<reference key="1">
    <citation type="journal article" date="2003" name="Nature">
        <title>The genome sequence of Bacillus anthracis Ames and comparison to closely related bacteria.</title>
        <authorList>
            <person name="Read T.D."/>
            <person name="Peterson S.N."/>
            <person name="Tourasse N.J."/>
            <person name="Baillie L.W."/>
            <person name="Paulsen I.T."/>
            <person name="Nelson K.E."/>
            <person name="Tettelin H."/>
            <person name="Fouts D.E."/>
            <person name="Eisen J.A."/>
            <person name="Gill S.R."/>
            <person name="Holtzapple E.K."/>
            <person name="Okstad O.A."/>
            <person name="Helgason E."/>
            <person name="Rilstone J."/>
            <person name="Wu M."/>
            <person name="Kolonay J.F."/>
            <person name="Beanan M.J."/>
            <person name="Dodson R.J."/>
            <person name="Brinkac L.M."/>
            <person name="Gwinn M.L."/>
            <person name="DeBoy R.T."/>
            <person name="Madpu R."/>
            <person name="Daugherty S.C."/>
            <person name="Durkin A.S."/>
            <person name="Haft D.H."/>
            <person name="Nelson W.C."/>
            <person name="Peterson J.D."/>
            <person name="Pop M."/>
            <person name="Khouri H.M."/>
            <person name="Radune D."/>
            <person name="Benton J.L."/>
            <person name="Mahamoud Y."/>
            <person name="Jiang L."/>
            <person name="Hance I.R."/>
            <person name="Weidman J.F."/>
            <person name="Berry K.J."/>
            <person name="Plaut R.D."/>
            <person name="Wolf A.M."/>
            <person name="Watkins K.L."/>
            <person name="Nierman W.C."/>
            <person name="Hazen A."/>
            <person name="Cline R.T."/>
            <person name="Redmond C."/>
            <person name="Thwaite J.E."/>
            <person name="White O."/>
            <person name="Salzberg S.L."/>
            <person name="Thomason B."/>
            <person name="Friedlander A.M."/>
            <person name="Koehler T.M."/>
            <person name="Hanna P.C."/>
            <person name="Kolstoe A.-B."/>
            <person name="Fraser C.M."/>
        </authorList>
    </citation>
    <scope>NUCLEOTIDE SEQUENCE [LARGE SCALE GENOMIC DNA]</scope>
    <source>
        <strain>Ames / isolate Porton</strain>
    </source>
</reference>
<reference key="2">
    <citation type="journal article" date="2009" name="J. Bacteriol.">
        <title>The complete genome sequence of Bacillus anthracis Ames 'Ancestor'.</title>
        <authorList>
            <person name="Ravel J."/>
            <person name="Jiang L."/>
            <person name="Stanley S.T."/>
            <person name="Wilson M.R."/>
            <person name="Decker R.S."/>
            <person name="Read T.D."/>
            <person name="Worsham P."/>
            <person name="Keim P.S."/>
            <person name="Salzberg S.L."/>
            <person name="Fraser-Liggett C.M."/>
            <person name="Rasko D.A."/>
        </authorList>
    </citation>
    <scope>NUCLEOTIDE SEQUENCE [LARGE SCALE GENOMIC DNA]</scope>
    <source>
        <strain>Ames ancestor</strain>
    </source>
</reference>
<reference key="3">
    <citation type="submission" date="2004-01" db="EMBL/GenBank/DDBJ databases">
        <title>Complete genome sequence of Bacillus anthracis Sterne.</title>
        <authorList>
            <person name="Brettin T.S."/>
            <person name="Bruce D."/>
            <person name="Challacombe J.F."/>
            <person name="Gilna P."/>
            <person name="Han C."/>
            <person name="Hill K."/>
            <person name="Hitchcock P."/>
            <person name="Jackson P."/>
            <person name="Keim P."/>
            <person name="Longmire J."/>
            <person name="Lucas S."/>
            <person name="Okinaka R."/>
            <person name="Richardson P."/>
            <person name="Rubin E."/>
            <person name="Tice H."/>
        </authorList>
    </citation>
    <scope>NUCLEOTIDE SEQUENCE [LARGE SCALE GENOMIC DNA]</scope>
    <source>
        <strain>Sterne</strain>
    </source>
</reference>
<protein>
    <recommendedName>
        <fullName evidence="2">Large ribosomal subunit protein bL27</fullName>
    </recommendedName>
    <alternativeName>
        <fullName evidence="4">50S ribosomal protein L27</fullName>
    </alternativeName>
</protein>
<comment type="PTM">
    <text evidence="1">The N-terminus is cleaved by ribosomal processing cysteine protease Prp.</text>
</comment>
<comment type="similarity">
    <text evidence="2">Belongs to the bacterial ribosomal protein bL27 family.</text>
</comment>
<proteinExistence type="inferred from homology"/>
<keyword id="KW-1185">Reference proteome</keyword>
<keyword id="KW-0687">Ribonucleoprotein</keyword>
<keyword id="KW-0689">Ribosomal protein</keyword>
<accession>Q81LE8</accession>
<accession>Q6HSV1</accession>
<accession>Q6KM44</accession>
<gene>
    <name evidence="2" type="primary">rpmA</name>
    <name type="ordered locus">BA_4674</name>
    <name type="ordered locus">GBAA_4674</name>
    <name type="ordered locus">BAS4340</name>
</gene>
<organism>
    <name type="scientific">Bacillus anthracis</name>
    <dbReference type="NCBI Taxonomy" id="1392"/>
    <lineage>
        <taxon>Bacteria</taxon>
        <taxon>Bacillati</taxon>
        <taxon>Bacillota</taxon>
        <taxon>Bacilli</taxon>
        <taxon>Bacillales</taxon>
        <taxon>Bacillaceae</taxon>
        <taxon>Bacillus</taxon>
        <taxon>Bacillus cereus group</taxon>
    </lineage>
</organism>
<sequence length="96" mass="10491">MLRLDLQFFASKKGVGSTKNGRDSQSKRLGAKRADGQTVSGGSILYRQRGTKIYPGVNVGRGGDDTLYAKVDGVVRFERLGRDRKQVSVYPVAQEA</sequence>
<dbReference type="EMBL" id="AE016879">
    <property type="protein sequence ID" value="AAP28374.1"/>
    <property type="molecule type" value="Genomic_DNA"/>
</dbReference>
<dbReference type="EMBL" id="AE017334">
    <property type="protein sequence ID" value="AAT33797.1"/>
    <property type="molecule type" value="Genomic_DNA"/>
</dbReference>
<dbReference type="EMBL" id="AE017225">
    <property type="protein sequence ID" value="AAT56638.1"/>
    <property type="molecule type" value="Genomic_DNA"/>
</dbReference>
<dbReference type="RefSeq" id="NP_846888.1">
    <property type="nucleotide sequence ID" value="NC_003997.3"/>
</dbReference>
<dbReference type="RefSeq" id="WP_000944957.1">
    <property type="nucleotide sequence ID" value="NZ_WXXJ01000027.1"/>
</dbReference>
<dbReference type="RefSeq" id="YP_030587.1">
    <property type="nucleotide sequence ID" value="NC_005945.1"/>
</dbReference>
<dbReference type="SMR" id="Q81LE8"/>
<dbReference type="STRING" id="261594.GBAA_4674"/>
<dbReference type="DNASU" id="1086262"/>
<dbReference type="GeneID" id="92884982"/>
<dbReference type="KEGG" id="ban:BA_4674"/>
<dbReference type="KEGG" id="bar:GBAA_4674"/>
<dbReference type="KEGG" id="bat:BAS4340"/>
<dbReference type="PATRIC" id="fig|198094.11.peg.4640"/>
<dbReference type="eggNOG" id="COG0211">
    <property type="taxonomic scope" value="Bacteria"/>
</dbReference>
<dbReference type="HOGENOM" id="CLU_095424_4_0_9"/>
<dbReference type="OMA" id="GKDHTLH"/>
<dbReference type="OrthoDB" id="9803474at2"/>
<dbReference type="Proteomes" id="UP000000427">
    <property type="component" value="Chromosome"/>
</dbReference>
<dbReference type="Proteomes" id="UP000000594">
    <property type="component" value="Chromosome"/>
</dbReference>
<dbReference type="GO" id="GO:0022625">
    <property type="term" value="C:cytosolic large ribosomal subunit"/>
    <property type="evidence" value="ECO:0007669"/>
    <property type="project" value="TreeGrafter"/>
</dbReference>
<dbReference type="GO" id="GO:0003735">
    <property type="term" value="F:structural constituent of ribosome"/>
    <property type="evidence" value="ECO:0007669"/>
    <property type="project" value="InterPro"/>
</dbReference>
<dbReference type="GO" id="GO:0006412">
    <property type="term" value="P:translation"/>
    <property type="evidence" value="ECO:0007669"/>
    <property type="project" value="UniProtKB-UniRule"/>
</dbReference>
<dbReference type="FunFam" id="2.40.50.100:FF:000004">
    <property type="entry name" value="50S ribosomal protein L27"/>
    <property type="match status" value="1"/>
</dbReference>
<dbReference type="Gene3D" id="2.40.50.100">
    <property type="match status" value="1"/>
</dbReference>
<dbReference type="HAMAP" id="MF_00539">
    <property type="entry name" value="Ribosomal_bL27"/>
    <property type="match status" value="1"/>
</dbReference>
<dbReference type="InterPro" id="IPR001684">
    <property type="entry name" value="Ribosomal_bL27"/>
</dbReference>
<dbReference type="InterPro" id="IPR018261">
    <property type="entry name" value="Ribosomal_bL27_CS"/>
</dbReference>
<dbReference type="NCBIfam" id="TIGR00062">
    <property type="entry name" value="L27"/>
    <property type="match status" value="1"/>
</dbReference>
<dbReference type="PANTHER" id="PTHR15893:SF0">
    <property type="entry name" value="LARGE RIBOSOMAL SUBUNIT PROTEIN BL27M"/>
    <property type="match status" value="1"/>
</dbReference>
<dbReference type="PANTHER" id="PTHR15893">
    <property type="entry name" value="RIBOSOMAL PROTEIN L27"/>
    <property type="match status" value="1"/>
</dbReference>
<dbReference type="Pfam" id="PF01016">
    <property type="entry name" value="Ribosomal_L27"/>
    <property type="match status" value="1"/>
</dbReference>
<dbReference type="PRINTS" id="PR00063">
    <property type="entry name" value="RIBOSOMALL27"/>
</dbReference>
<dbReference type="SUPFAM" id="SSF110324">
    <property type="entry name" value="Ribosomal L27 protein-like"/>
    <property type="match status" value="1"/>
</dbReference>
<dbReference type="PROSITE" id="PS00831">
    <property type="entry name" value="RIBOSOMAL_L27"/>
    <property type="match status" value="1"/>
</dbReference>
<name>RL27_BACAN</name>
<feature type="propeptide" id="PRO_0000459847" evidence="1">
    <location>
        <begin position="1"/>
        <end position="9"/>
    </location>
</feature>
<feature type="chain" id="PRO_0000181034" description="Large ribosomal subunit protein bL27">
    <location>
        <begin position="10"/>
        <end position="96"/>
    </location>
</feature>
<feature type="region of interest" description="Disordered" evidence="3">
    <location>
        <begin position="14"/>
        <end position="36"/>
    </location>
</feature>
<evidence type="ECO:0000250" key="1">
    <source>
        <dbReference type="UniProtKB" id="Q2FXT0"/>
    </source>
</evidence>
<evidence type="ECO:0000255" key="2">
    <source>
        <dbReference type="HAMAP-Rule" id="MF_00539"/>
    </source>
</evidence>
<evidence type="ECO:0000256" key="3">
    <source>
        <dbReference type="SAM" id="MobiDB-lite"/>
    </source>
</evidence>
<evidence type="ECO:0000305" key="4"/>